<proteinExistence type="evidence at transcript level"/>
<reference key="1">
    <citation type="journal article" date="2005" name="BMC Genomics">
        <title>Characterization of 954 bovine full-CDS cDNA sequences.</title>
        <authorList>
            <person name="Harhay G.P."/>
            <person name="Sonstegard T.S."/>
            <person name="Keele J.W."/>
            <person name="Heaton M.P."/>
            <person name="Clawson M.L."/>
            <person name="Snelling W.M."/>
            <person name="Wiedmann R.T."/>
            <person name="Van Tassell C.P."/>
            <person name="Smith T.P.L."/>
        </authorList>
    </citation>
    <scope>NUCLEOTIDE SEQUENCE [LARGE SCALE MRNA]</scope>
</reference>
<reference key="2">
    <citation type="submission" date="2006-09" db="EMBL/GenBank/DDBJ databases">
        <authorList>
            <consortium name="NIH - Mammalian Gene Collection (MGC) project"/>
        </authorList>
    </citation>
    <scope>NUCLEOTIDE SEQUENCE [LARGE SCALE MRNA]</scope>
    <source>
        <strain>Hereford</strain>
        <tissue>Fetal muscle</tissue>
    </source>
</reference>
<gene>
    <name type="primary">CPT1B</name>
</gene>
<dbReference type="EC" id="2.3.1.21" evidence="3"/>
<dbReference type="EMBL" id="BT021596">
    <property type="protein sequence ID" value="AAX46443.1"/>
    <property type="molecule type" value="mRNA"/>
</dbReference>
<dbReference type="EMBL" id="BC123511">
    <property type="protein sequence ID" value="AAI23512.1"/>
    <property type="molecule type" value="mRNA"/>
</dbReference>
<dbReference type="RefSeq" id="NP_001029521.1">
    <property type="nucleotide sequence ID" value="NM_001034349.2"/>
</dbReference>
<dbReference type="SMR" id="Q58DK1"/>
<dbReference type="FunCoup" id="Q58DK1">
    <property type="interactions" value="170"/>
</dbReference>
<dbReference type="STRING" id="9913.ENSBTAP00000021357"/>
<dbReference type="PaxDb" id="9913-ENSBTAP00000021357"/>
<dbReference type="Ensembl" id="ENSBTAT00000021357.6">
    <property type="protein sequence ID" value="ENSBTAP00000021357.4"/>
    <property type="gene ID" value="ENSBTAG00000016048.6"/>
</dbReference>
<dbReference type="GeneID" id="509459"/>
<dbReference type="KEGG" id="bta:509459"/>
<dbReference type="CTD" id="1375"/>
<dbReference type="VEuPathDB" id="HostDB:ENSBTAG00000016048"/>
<dbReference type="VGNC" id="VGNC:27677">
    <property type="gene designation" value="CPT1B"/>
</dbReference>
<dbReference type="eggNOG" id="KOG3716">
    <property type="taxonomic scope" value="Eukaryota"/>
</dbReference>
<dbReference type="GeneTree" id="ENSGT01130000278324"/>
<dbReference type="HOGENOM" id="CLU_013513_2_1_1"/>
<dbReference type="InParanoid" id="Q58DK1"/>
<dbReference type="OMA" id="PERCGPY"/>
<dbReference type="OrthoDB" id="240216at2759"/>
<dbReference type="TreeFam" id="TF313836"/>
<dbReference type="Reactome" id="R-BTA-200425">
    <property type="pathway name" value="Carnitine shuttle"/>
</dbReference>
<dbReference type="UniPathway" id="UPA00659"/>
<dbReference type="Proteomes" id="UP000009136">
    <property type="component" value="Chromosome 5"/>
</dbReference>
<dbReference type="Bgee" id="ENSBTAG00000016048">
    <property type="expression patterns" value="Expressed in cardiac ventricle and 102 other cell types or tissues"/>
</dbReference>
<dbReference type="GO" id="GO:0005741">
    <property type="term" value="C:mitochondrial outer membrane"/>
    <property type="evidence" value="ECO:0007669"/>
    <property type="project" value="UniProtKB-SubCell"/>
</dbReference>
<dbReference type="GO" id="GO:0005739">
    <property type="term" value="C:mitochondrion"/>
    <property type="evidence" value="ECO:0000318"/>
    <property type="project" value="GO_Central"/>
</dbReference>
<dbReference type="GO" id="GO:0004095">
    <property type="term" value="F:carnitine O-palmitoyltransferase activity"/>
    <property type="evidence" value="ECO:0000250"/>
    <property type="project" value="UniProtKB"/>
</dbReference>
<dbReference type="GO" id="GO:0009437">
    <property type="term" value="P:carnitine metabolic process"/>
    <property type="evidence" value="ECO:0000250"/>
    <property type="project" value="UniProtKB"/>
</dbReference>
<dbReference type="GO" id="GO:0006635">
    <property type="term" value="P:fatty acid beta-oxidation"/>
    <property type="evidence" value="ECO:0007669"/>
    <property type="project" value="UniProtKB-UniPathway"/>
</dbReference>
<dbReference type="GO" id="GO:0006631">
    <property type="term" value="P:fatty acid metabolic process"/>
    <property type="evidence" value="ECO:0000250"/>
    <property type="project" value="UniProtKB"/>
</dbReference>
<dbReference type="GO" id="GO:0015909">
    <property type="term" value="P:long-chain fatty acid transport"/>
    <property type="evidence" value="ECO:0000318"/>
    <property type="project" value="GO_Central"/>
</dbReference>
<dbReference type="GO" id="GO:0009637">
    <property type="term" value="P:response to blue light"/>
    <property type="evidence" value="ECO:0000250"/>
    <property type="project" value="UniProtKB"/>
</dbReference>
<dbReference type="FunFam" id="3.30.559.70:FF:000001">
    <property type="entry name" value="Carnitine O-palmitoyltransferase 1, liver isoform"/>
    <property type="match status" value="1"/>
</dbReference>
<dbReference type="FunFam" id="3.30.559.10:FF:000042">
    <property type="entry name" value="Carnitine Palmitoyl Transferase"/>
    <property type="match status" value="1"/>
</dbReference>
<dbReference type="Gene3D" id="6.10.250.1760">
    <property type="match status" value="1"/>
</dbReference>
<dbReference type="Gene3D" id="3.30.559.10">
    <property type="entry name" value="Chloramphenicol acetyltransferase-like domain"/>
    <property type="match status" value="1"/>
</dbReference>
<dbReference type="Gene3D" id="3.30.559.70">
    <property type="entry name" value="Choline/Carnitine o-acyltransferase, domain 2"/>
    <property type="match status" value="1"/>
</dbReference>
<dbReference type="InterPro" id="IPR000542">
    <property type="entry name" value="Carn_acyl_trans"/>
</dbReference>
<dbReference type="InterPro" id="IPR023213">
    <property type="entry name" value="CAT-like_dom_sf"/>
</dbReference>
<dbReference type="InterPro" id="IPR039551">
    <property type="entry name" value="Cho/carn_acyl_trans"/>
</dbReference>
<dbReference type="InterPro" id="IPR042231">
    <property type="entry name" value="Cho/carn_acyl_trans_2"/>
</dbReference>
<dbReference type="InterPro" id="IPR032476">
    <property type="entry name" value="CPT_N"/>
</dbReference>
<dbReference type="PANTHER" id="PTHR22589">
    <property type="entry name" value="CARNITINE O-ACYLTRANSFERASE"/>
    <property type="match status" value="1"/>
</dbReference>
<dbReference type="PANTHER" id="PTHR22589:SF69">
    <property type="entry name" value="CARNITINE O-PALMITOYLTRANSFERASE 1, MUSCLE ISOFORM"/>
    <property type="match status" value="1"/>
</dbReference>
<dbReference type="Pfam" id="PF00755">
    <property type="entry name" value="Carn_acyltransf"/>
    <property type="match status" value="1"/>
</dbReference>
<dbReference type="Pfam" id="PF16484">
    <property type="entry name" value="CPT_N"/>
    <property type="match status" value="1"/>
</dbReference>
<dbReference type="SUPFAM" id="SSF52777">
    <property type="entry name" value="CoA-dependent acyltransferases"/>
    <property type="match status" value="2"/>
</dbReference>
<dbReference type="PROSITE" id="PS00439">
    <property type="entry name" value="ACYLTRANSF_C_1"/>
    <property type="match status" value="1"/>
</dbReference>
<dbReference type="PROSITE" id="PS00440">
    <property type="entry name" value="ACYLTRANSF_C_2"/>
    <property type="match status" value="1"/>
</dbReference>
<comment type="function">
    <text evidence="2">Catalyzes the transfer of the acyl group of long-chain fatty acid-CoA conjugates onto carnitine, an essential step for the mitochondrial uptake of long-chain fatty acids and their subsequent beta-oxidation in the mitochondrion.</text>
</comment>
<comment type="catalytic activity">
    <reaction evidence="2">
        <text>(R)-carnitine + hexadecanoyl-CoA = O-hexadecanoyl-(R)-carnitine + CoA</text>
        <dbReference type="Rhea" id="RHEA:12661"/>
        <dbReference type="ChEBI" id="CHEBI:16347"/>
        <dbReference type="ChEBI" id="CHEBI:17490"/>
        <dbReference type="ChEBI" id="CHEBI:57287"/>
        <dbReference type="ChEBI" id="CHEBI:57379"/>
        <dbReference type="EC" id="2.3.1.21"/>
    </reaction>
    <physiologicalReaction direction="left-to-right" evidence="2">
        <dbReference type="Rhea" id="RHEA:12662"/>
    </physiologicalReaction>
</comment>
<comment type="pathway">
    <text>Lipid metabolism; fatty acid beta-oxidation.</text>
</comment>
<comment type="subcellular location">
    <subcellularLocation>
        <location evidence="3">Mitochondrion outer membrane</location>
        <topology evidence="4">Multi-pass membrane protein</topology>
    </subcellularLocation>
</comment>
<comment type="similarity">
    <text evidence="5">Belongs to the carnitine/choline acetyltransferase family.</text>
</comment>
<protein>
    <recommendedName>
        <fullName>Carnitine O-palmitoyltransferase 1, muscle isoform</fullName>
        <shortName>CPT1-M</shortName>
        <ecNumber evidence="3">2.3.1.21</ecNumber>
    </recommendedName>
    <alternativeName>
        <fullName>Carnitine O-palmitoyltransferase I, muscle isoform</fullName>
        <shortName>CPT I</shortName>
        <shortName>CPTI-M</shortName>
    </alternativeName>
    <alternativeName>
        <fullName>Carnitine palmitoyltransferase 1B</fullName>
    </alternativeName>
</protein>
<feature type="chain" id="PRO_0000245505" description="Carnitine O-palmitoyltransferase 1, muscle isoform">
    <location>
        <begin position="1"/>
        <end position="771"/>
    </location>
</feature>
<feature type="topological domain" description="Cytoplasmic" evidence="4">
    <location>
        <begin position="1"/>
        <end position="47"/>
    </location>
</feature>
<feature type="transmembrane region" description="Helical" evidence="4">
    <location>
        <begin position="48"/>
        <end position="73"/>
    </location>
</feature>
<feature type="topological domain" description="Mitochondrial intermembrane" evidence="4">
    <location>
        <begin position="74"/>
        <end position="101"/>
    </location>
</feature>
<feature type="transmembrane region" description="Helical" evidence="4">
    <location>
        <begin position="102"/>
        <end position="121"/>
    </location>
</feature>
<feature type="topological domain" description="Cytoplasmic" evidence="4">
    <location>
        <begin position="122"/>
        <end position="771"/>
    </location>
</feature>
<feature type="active site" description="Proton acceptor" evidence="1">
    <location>
        <position position="472"/>
    </location>
</feature>
<feature type="binding site" evidence="1">
    <location>
        <begin position="554"/>
        <end position="566"/>
    </location>
    <ligand>
        <name>CoA</name>
        <dbReference type="ChEBI" id="CHEBI:57287"/>
    </ligand>
</feature>
<feature type="binding site" evidence="1">
    <location>
        <position position="588"/>
    </location>
    <ligand>
        <name>(R)-carnitine</name>
        <dbReference type="ChEBI" id="CHEBI:16347"/>
    </ligand>
</feature>
<feature type="binding site" evidence="1">
    <location>
        <position position="601"/>
    </location>
    <ligand>
        <name>(R)-carnitine</name>
        <dbReference type="ChEBI" id="CHEBI:16347"/>
    </ligand>
</feature>
<name>CPT1B_BOVIN</name>
<keyword id="KW-0012">Acyltransferase</keyword>
<keyword id="KW-0276">Fatty acid metabolism</keyword>
<keyword id="KW-0443">Lipid metabolism</keyword>
<keyword id="KW-0472">Membrane</keyword>
<keyword id="KW-0496">Mitochondrion</keyword>
<keyword id="KW-1000">Mitochondrion outer membrane</keyword>
<keyword id="KW-1185">Reference proteome</keyword>
<keyword id="KW-0808">Transferase</keyword>
<keyword id="KW-0812">Transmembrane</keyword>
<keyword id="KW-1133">Transmembrane helix</keyword>
<keyword id="KW-0813">Transport</keyword>
<evidence type="ECO:0000250" key="1">
    <source>
        <dbReference type="UniProtKB" id="P18886"/>
    </source>
</evidence>
<evidence type="ECO:0000250" key="2">
    <source>
        <dbReference type="UniProtKB" id="Q63704"/>
    </source>
</evidence>
<evidence type="ECO:0000250" key="3">
    <source>
        <dbReference type="UniProtKB" id="Q92523"/>
    </source>
</evidence>
<evidence type="ECO:0000255" key="4"/>
<evidence type="ECO:0000305" key="5"/>
<sequence length="771" mass="88512">MAEAHQAVAFQFTVTPEGVDFQLSREVLKHIYLSVIRSWKKRLIRIKNGILRGVYPGSPTSWLVVVMATAGSSYYNVDISMGLVYYIQRWLPEGRPYRTPYTRTLFSMAIFSTGVWMMGIFFFRQTLKLLLSYHGWMFELHGQTSHLTRVWAVCVRLLSGRRPMLYSFQTSLPKLPVPSVPATVHRYLESVEHLLDDEQYYRMETLAKEFEEKTAPRLQKYLVLKSWWATNYVSDWWEEYVYLRGRNPIVVNSNYYVMDLVLVKNTDVQAARLGNAVHAMITYRRKLDREEIKPVMALGLVPMCSYQMERMFNTTRIPGKDTDVLQHLPDSRHVAVYHKGRFFKVWLYEGSRLLKPRDLEMQFQRILDDPSPPQPGEERLAALTAGGRVEWAQARQAFFSSGKNKAALDAIERAAFFVALDEESHHYDPEDEASLSLYGKALLHGNCYNRWFDKSFTLISFKNGQLGLNTEHAWADAPIIGHLWEFVLGTDSFHLGYTETGHCLGKPNPVLPPPQRLQWDIPKQCQAVIESSYQVAKALADDVELYCFQFLPFGKGLIKKCRTSPDAFVQIALQLAHFRDRGKFCLTYEASMTRMFREGRTETVRSCTRESTAFVQAMVQGRHLNEDLQRLFRKAAEKHQNMYRLAMTGAGIDRHLFCLYVVSKYLGVESPFLAEVLSEPWRLSTSQIAQFQIRMFDPNKYPKHLGAGGGFGPVADDGYGVSYMIAGENTIFFHVSSKFSSSETNAQRFGNQIRQALLDIANLFQVPKADG</sequence>
<accession>Q58DK1</accession>
<accession>Q08DY3</accession>
<organism>
    <name type="scientific">Bos taurus</name>
    <name type="common">Bovine</name>
    <dbReference type="NCBI Taxonomy" id="9913"/>
    <lineage>
        <taxon>Eukaryota</taxon>
        <taxon>Metazoa</taxon>
        <taxon>Chordata</taxon>
        <taxon>Craniata</taxon>
        <taxon>Vertebrata</taxon>
        <taxon>Euteleostomi</taxon>
        <taxon>Mammalia</taxon>
        <taxon>Eutheria</taxon>
        <taxon>Laurasiatheria</taxon>
        <taxon>Artiodactyla</taxon>
        <taxon>Ruminantia</taxon>
        <taxon>Pecora</taxon>
        <taxon>Bovidae</taxon>
        <taxon>Bovinae</taxon>
        <taxon>Bos</taxon>
    </lineage>
</organism>